<sequence>MPFQIPDDLNRDLMPLAWMIGHWEGEGHGNTPDDGEFSFGCQVDFTDNGGDYLHYICQTFTMNPDGTPAAPLRMETGFWRPNVDTRKVDVLMAAPEGWAEVWTGNIDGAKIELVTDAVARTEEALVPYTGGQRLYGQVEGDLLWTFDRATVDAPLQPYMWARLKRS</sequence>
<organism>
    <name type="scientific">Cutibacterium acnes (strain DSM 16379 / KPA171202)</name>
    <name type="common">Propionibacterium acnes</name>
    <dbReference type="NCBI Taxonomy" id="267747"/>
    <lineage>
        <taxon>Bacteria</taxon>
        <taxon>Bacillati</taxon>
        <taxon>Actinomycetota</taxon>
        <taxon>Actinomycetes</taxon>
        <taxon>Propionibacteriales</taxon>
        <taxon>Propionibacteriaceae</taxon>
        <taxon>Cutibacterium</taxon>
    </lineage>
</organism>
<reference key="1">
    <citation type="journal article" date="2004" name="Science">
        <title>The complete genome sequence of Propionibacterium acnes, a commensal of human skin.</title>
        <authorList>
            <person name="Brueggemann H."/>
            <person name="Henne A."/>
            <person name="Hoster F."/>
            <person name="Liesegang H."/>
            <person name="Wiezer A."/>
            <person name="Strittmatter A."/>
            <person name="Hujer S."/>
            <person name="Duerre P."/>
            <person name="Gottschalk G."/>
        </authorList>
    </citation>
    <scope>NUCLEOTIDE SEQUENCE [LARGE SCALE GENOMIC DNA]</scope>
    <source>
        <strain>DSM 16379 / KPA171202</strain>
    </source>
</reference>
<name>NBLIK_CUTAK</name>
<feature type="chain" id="PRO_0000356944" description="Ferric nitrobindin-like protein">
    <location>
        <begin position="1"/>
        <end position="166"/>
    </location>
</feature>
<feature type="short sequence motif" description="GXWXGXG" evidence="1">
    <location>
        <begin position="21"/>
        <end position="27"/>
    </location>
</feature>
<comment type="similarity">
    <text evidence="1">Belongs to the nitrobindin family.</text>
</comment>
<comment type="caution">
    <text evidence="2">Lacks the conserved His residue that binds heme iron in the nitrobindin family.</text>
</comment>
<protein>
    <recommendedName>
        <fullName evidence="2">Ferric nitrobindin-like protein</fullName>
    </recommendedName>
</protein>
<accession>Q6AAW4</accession>
<evidence type="ECO:0000255" key="1">
    <source>
        <dbReference type="HAMAP-Rule" id="MF_01297"/>
    </source>
</evidence>
<evidence type="ECO:0000305" key="2"/>
<gene>
    <name type="ordered locus">PPA0347</name>
</gene>
<proteinExistence type="inferred from homology"/>
<dbReference type="EMBL" id="AE017283">
    <property type="protein sequence ID" value="AAT82102.1"/>
    <property type="molecule type" value="Genomic_DNA"/>
</dbReference>
<dbReference type="RefSeq" id="WP_002517150.1">
    <property type="nucleotide sequence ID" value="NZ_CP025935.1"/>
</dbReference>
<dbReference type="SMR" id="Q6AAW4"/>
<dbReference type="EnsemblBacteria" id="AAT82102">
    <property type="protein sequence ID" value="AAT82102"/>
    <property type="gene ID" value="PPA0347"/>
</dbReference>
<dbReference type="KEGG" id="pac:PPA0347"/>
<dbReference type="eggNOG" id="COG3485">
    <property type="taxonomic scope" value="Bacteria"/>
</dbReference>
<dbReference type="HOGENOM" id="CLU_085483_0_0_11"/>
<dbReference type="Proteomes" id="UP000000603">
    <property type="component" value="Chromosome"/>
</dbReference>
<dbReference type="CDD" id="cd07828">
    <property type="entry name" value="lipocalin_heme-bd-THAP4-like"/>
    <property type="match status" value="1"/>
</dbReference>
<dbReference type="Gene3D" id="2.40.128.20">
    <property type="match status" value="1"/>
</dbReference>
<dbReference type="HAMAP" id="MF_01297">
    <property type="entry name" value="nitrobindin"/>
    <property type="match status" value="1"/>
</dbReference>
<dbReference type="InterPro" id="IPR012674">
    <property type="entry name" value="Calycin"/>
</dbReference>
<dbReference type="InterPro" id="IPR022939">
    <property type="entry name" value="Nb(III)_bact/plant"/>
</dbReference>
<dbReference type="InterPro" id="IPR045165">
    <property type="entry name" value="Nitrobindin"/>
</dbReference>
<dbReference type="InterPro" id="IPR014878">
    <property type="entry name" value="THAP4-like_heme-bd"/>
</dbReference>
<dbReference type="PANTHER" id="PTHR15854:SF4">
    <property type="entry name" value="PEROXYNITRITE ISOMERASE THAP4"/>
    <property type="match status" value="1"/>
</dbReference>
<dbReference type="PANTHER" id="PTHR15854">
    <property type="entry name" value="THAP4 PROTEIN"/>
    <property type="match status" value="1"/>
</dbReference>
<dbReference type="Pfam" id="PF08768">
    <property type="entry name" value="THAP4_heme-bd"/>
    <property type="match status" value="1"/>
</dbReference>
<dbReference type="SUPFAM" id="SSF50814">
    <property type="entry name" value="Lipocalins"/>
    <property type="match status" value="1"/>
</dbReference>